<sequence length="100" mass="10165">MCSGPKQGLTLPASVDLEKETVITGRVVDGDGQAVGGAFVRLLDSSDEFTAEVVASATGDFRFFAAPGSWTLRALSAAGNGDAVVQPSGAGIHEVDVKIT</sequence>
<protein>
    <recommendedName>
        <fullName>Uncharacterized protein Rv3118</fullName>
    </recommendedName>
</protein>
<feature type="chain" id="PRO_0000396084" description="Uncharacterized protein Rv3118">
    <location>
        <begin position="1"/>
        <end position="100"/>
    </location>
</feature>
<feature type="cross-link" description="Isoglutamyl lysine isopeptide (Lys-Gln) (interchain with Q-Cter in protein Pup)" evidence="1">
    <location>
        <position position="98"/>
    </location>
</feature>
<proteinExistence type="evidence at protein level"/>
<name>Y3118_MYCTU</name>
<dbReference type="EMBL" id="AL123456">
    <property type="protein sequence ID" value="CCP45928.1"/>
    <property type="molecule type" value="Genomic_DNA"/>
</dbReference>
<dbReference type="RefSeq" id="NP_215329.1">
    <property type="nucleotide sequence ID" value="NC_000962.3"/>
</dbReference>
<dbReference type="RefSeq" id="WP_003404278.1">
    <property type="nucleotide sequence ID" value="NZ_NVQJ01000118.1"/>
</dbReference>
<dbReference type="RefSeq" id="YP_177930.1">
    <property type="nucleotide sequence ID" value="NC_000962.3"/>
</dbReference>
<dbReference type="SMR" id="P0CG96"/>
<dbReference type="STRING" id="83332.Rv0814c"/>
<dbReference type="PaxDb" id="83332-Rv0814c"/>
<dbReference type="GeneID" id="888809"/>
<dbReference type="KEGG" id="mtu:Rv0814c"/>
<dbReference type="KEGG" id="mtu:Rv3118"/>
<dbReference type="KEGG" id="mtv:RVBD_0814c"/>
<dbReference type="KEGG" id="mtv:RVBD_3118"/>
<dbReference type="TubercuList" id="Rv3118"/>
<dbReference type="eggNOG" id="ENOG5032Y6I">
    <property type="taxonomic scope" value="Bacteria"/>
</dbReference>
<dbReference type="InParanoid" id="P0CG96"/>
<dbReference type="OrthoDB" id="3729294at2"/>
<dbReference type="PhylomeDB" id="P0CG96"/>
<dbReference type="Proteomes" id="UP000001584">
    <property type="component" value="Chromosome"/>
</dbReference>
<dbReference type="FunFam" id="2.60.40.1120:FF:000013">
    <property type="entry name" value="DUF1416 domain-containing protein"/>
    <property type="match status" value="1"/>
</dbReference>
<dbReference type="Gene3D" id="2.60.40.1120">
    <property type="entry name" value="Carboxypeptidase-like, regulatory domain"/>
    <property type="match status" value="1"/>
</dbReference>
<dbReference type="InterPro" id="IPR008969">
    <property type="entry name" value="CarboxyPept-like_regulatory"/>
</dbReference>
<dbReference type="InterPro" id="IPR010814">
    <property type="entry name" value="DUF1416"/>
</dbReference>
<dbReference type="Pfam" id="PF07210">
    <property type="entry name" value="DUF1416"/>
    <property type="match status" value="1"/>
</dbReference>
<dbReference type="SUPFAM" id="SSF49464">
    <property type="entry name" value="Carboxypeptidase regulatory domain-like"/>
    <property type="match status" value="1"/>
</dbReference>
<comment type="miscellaneous">
    <text>Pupylation of this protein has been demonstrated, however it is unknown if it is the product of this gene, of the identical gene Rv0814c (AC P0CG95), or of both of them.</text>
</comment>
<organism>
    <name type="scientific">Mycobacterium tuberculosis (strain ATCC 25618 / H37Rv)</name>
    <dbReference type="NCBI Taxonomy" id="83332"/>
    <lineage>
        <taxon>Bacteria</taxon>
        <taxon>Bacillati</taxon>
        <taxon>Actinomycetota</taxon>
        <taxon>Actinomycetes</taxon>
        <taxon>Mycobacteriales</taxon>
        <taxon>Mycobacteriaceae</taxon>
        <taxon>Mycobacterium</taxon>
        <taxon>Mycobacterium tuberculosis complex</taxon>
    </lineage>
</organism>
<evidence type="ECO:0000269" key="1">
    <source>
    </source>
</evidence>
<keyword id="KW-1017">Isopeptide bond</keyword>
<keyword id="KW-1185">Reference proteome</keyword>
<keyword id="KW-0832">Ubl conjugation</keyword>
<reference key="1">
    <citation type="journal article" date="1998" name="Nature">
        <title>Deciphering the biology of Mycobacterium tuberculosis from the complete genome sequence.</title>
        <authorList>
            <person name="Cole S.T."/>
            <person name="Brosch R."/>
            <person name="Parkhill J."/>
            <person name="Garnier T."/>
            <person name="Churcher C.M."/>
            <person name="Harris D.E."/>
            <person name="Gordon S.V."/>
            <person name="Eiglmeier K."/>
            <person name="Gas S."/>
            <person name="Barry C.E. III"/>
            <person name="Tekaia F."/>
            <person name="Badcock K."/>
            <person name="Basham D."/>
            <person name="Brown D."/>
            <person name="Chillingworth T."/>
            <person name="Connor R."/>
            <person name="Davies R.M."/>
            <person name="Devlin K."/>
            <person name="Feltwell T."/>
            <person name="Gentles S."/>
            <person name="Hamlin N."/>
            <person name="Holroyd S."/>
            <person name="Hornsby T."/>
            <person name="Jagels K."/>
            <person name="Krogh A."/>
            <person name="McLean J."/>
            <person name="Moule S."/>
            <person name="Murphy L.D."/>
            <person name="Oliver S."/>
            <person name="Osborne J."/>
            <person name="Quail M.A."/>
            <person name="Rajandream M.A."/>
            <person name="Rogers J."/>
            <person name="Rutter S."/>
            <person name="Seeger K."/>
            <person name="Skelton S."/>
            <person name="Squares S."/>
            <person name="Squares R."/>
            <person name="Sulston J.E."/>
            <person name="Taylor K."/>
            <person name="Whitehead S."/>
            <person name="Barrell B.G."/>
        </authorList>
    </citation>
    <scope>NUCLEOTIDE SEQUENCE [LARGE SCALE GENOMIC DNA]</scope>
    <source>
        <strain>ATCC 25618 / H37Rv</strain>
    </source>
</reference>
<reference key="2">
    <citation type="journal article" date="2010" name="PLoS ONE">
        <title>Prokaryotic ubiquitin-like protein (Pup) proteome of Mycobacterium tuberculosis.</title>
        <authorList>
            <person name="Festa R.A."/>
            <person name="McAllister F."/>
            <person name="Pearce M.J."/>
            <person name="Mintseris J."/>
            <person name="Burns K.E."/>
            <person name="Gygi S.P."/>
            <person name="Darwin K.H."/>
        </authorList>
    </citation>
    <scope>PUPYLATION AT LYS-98</scope>
    <scope>IDENTIFICATION BY MASS SPECTROMETRY</scope>
    <source>
        <strain>ATCC 25618 / H37Rv</strain>
    </source>
</reference>
<reference key="3">
    <citation type="journal article" date="2011" name="Mol. Cell. Proteomics">
        <title>Proteogenomic analysis of Mycobacterium tuberculosis by high resolution mass spectrometry.</title>
        <authorList>
            <person name="Kelkar D.S."/>
            <person name="Kumar D."/>
            <person name="Kumar P."/>
            <person name="Balakrishnan L."/>
            <person name="Muthusamy B."/>
            <person name="Yadav A.K."/>
            <person name="Shrivastava P."/>
            <person name="Marimuthu A."/>
            <person name="Anand S."/>
            <person name="Sundaram H."/>
            <person name="Kingsbury R."/>
            <person name="Harsha H.C."/>
            <person name="Nair B."/>
            <person name="Prasad T.S."/>
            <person name="Chauhan D.S."/>
            <person name="Katoch K."/>
            <person name="Katoch V.M."/>
            <person name="Kumar P."/>
            <person name="Chaerkady R."/>
            <person name="Ramachandran S."/>
            <person name="Dash D."/>
            <person name="Pandey A."/>
        </authorList>
    </citation>
    <scope>IDENTIFICATION BY MASS SPECTROMETRY [LARGE SCALE ANALYSIS]</scope>
    <source>
        <strain>ATCC 25618 / H37Rv</strain>
    </source>
</reference>
<accession>P0CG96</accession>
<accession>L0T7T3</accession>
<accession>Q6MX10</accession>
<accession>Q7ARR3</accession>
<accession>Q7D986</accession>
<gene>
    <name type="primary">sseC1</name>
    <name type="ordered locus">Rv3118</name>
</gene>